<protein>
    <recommendedName>
        <fullName evidence="9">Kinesin-like protein KIN-UA</fullName>
    </recommendedName>
    <alternativeName>
        <fullName evidence="7">AtKINUa</fullName>
    </alternativeName>
    <alternativeName>
        <fullName evidence="9">Protein ARMADILLO REPEAT KINESIN3</fullName>
    </alternativeName>
    <alternativeName>
        <fullName evidence="9">Protein ARMADILLO REPEAT-CONTAINING KINESIN 3</fullName>
    </alternativeName>
    <alternativeName>
        <fullName evidence="8">kinesin-like protein PAK</fullName>
    </alternativeName>
</protein>
<accession>Q9FZ06</accession>
<accession>Q9LNA4</accession>
<proteinExistence type="evidence at protein level"/>
<dbReference type="EMBL" id="AB290930">
    <property type="protein sequence ID" value="BAF95587.1"/>
    <property type="molecule type" value="mRNA"/>
</dbReference>
<dbReference type="EMBL" id="AF159052">
    <property type="protein sequence ID" value="AAG08965.1"/>
    <property type="molecule type" value="mRNA"/>
</dbReference>
<dbReference type="EMBL" id="AC025416">
    <property type="protein sequence ID" value="AAF79654.1"/>
    <property type="status" value="ALT_SEQ"/>
    <property type="molecule type" value="Genomic_DNA"/>
</dbReference>
<dbReference type="EMBL" id="CP002684">
    <property type="protein sequence ID" value="AEE28880.1"/>
    <property type="molecule type" value="Genomic_DNA"/>
</dbReference>
<dbReference type="RefSeq" id="NP_563908.1">
    <molecule id="Q9FZ06-1"/>
    <property type="nucleotide sequence ID" value="NM_101115.3"/>
</dbReference>
<dbReference type="SMR" id="Q9FZ06"/>
<dbReference type="BioGRID" id="23039">
    <property type="interactions" value="1"/>
</dbReference>
<dbReference type="FunCoup" id="Q9FZ06">
    <property type="interactions" value="266"/>
</dbReference>
<dbReference type="STRING" id="3702.Q9FZ06"/>
<dbReference type="iPTMnet" id="Q9FZ06"/>
<dbReference type="PaxDb" id="3702-AT1G12430.2"/>
<dbReference type="EnsemblPlants" id="AT1G12430.1">
    <molecule id="Q9FZ06-1"/>
    <property type="protein sequence ID" value="AT1G12430.1"/>
    <property type="gene ID" value="AT1G12430"/>
</dbReference>
<dbReference type="GeneID" id="837799"/>
<dbReference type="Gramene" id="AT1G12430.1">
    <molecule id="Q9FZ06-1"/>
    <property type="protein sequence ID" value="AT1G12430.1"/>
    <property type="gene ID" value="AT1G12430"/>
</dbReference>
<dbReference type="KEGG" id="ath:AT1G12430"/>
<dbReference type="Araport" id="AT1G12430"/>
<dbReference type="TAIR" id="AT1G12430">
    <property type="gene designation" value="ARK3"/>
</dbReference>
<dbReference type="eggNOG" id="KOG0240">
    <property type="taxonomic scope" value="Eukaryota"/>
</dbReference>
<dbReference type="InParanoid" id="Q9FZ06"/>
<dbReference type="OMA" id="HRFATNT"/>
<dbReference type="OrthoDB" id="1090635at2759"/>
<dbReference type="PhylomeDB" id="Q9FZ06"/>
<dbReference type="PRO" id="PR:Q9FZ06"/>
<dbReference type="Proteomes" id="UP000006548">
    <property type="component" value="Chromosome 1"/>
</dbReference>
<dbReference type="ExpressionAtlas" id="Q9FZ06">
    <property type="expression patterns" value="baseline and differential"/>
</dbReference>
<dbReference type="GO" id="GO:0005737">
    <property type="term" value="C:cytoplasm"/>
    <property type="evidence" value="ECO:0007669"/>
    <property type="project" value="UniProtKB-KW"/>
</dbReference>
<dbReference type="GO" id="GO:0005874">
    <property type="term" value="C:microtubule"/>
    <property type="evidence" value="ECO:0007669"/>
    <property type="project" value="UniProtKB-KW"/>
</dbReference>
<dbReference type="GO" id="GO:0005524">
    <property type="term" value="F:ATP binding"/>
    <property type="evidence" value="ECO:0007669"/>
    <property type="project" value="UniProtKB-KW"/>
</dbReference>
<dbReference type="GO" id="GO:0008017">
    <property type="term" value="F:microtubule binding"/>
    <property type="evidence" value="ECO:0007669"/>
    <property type="project" value="InterPro"/>
</dbReference>
<dbReference type="GO" id="GO:0003777">
    <property type="term" value="F:microtubule motor activity"/>
    <property type="evidence" value="ECO:0007669"/>
    <property type="project" value="InterPro"/>
</dbReference>
<dbReference type="GO" id="GO:0007018">
    <property type="term" value="P:microtubule-based movement"/>
    <property type="evidence" value="ECO:0007669"/>
    <property type="project" value="InterPro"/>
</dbReference>
<dbReference type="CDD" id="cd00106">
    <property type="entry name" value="KISc"/>
    <property type="match status" value="1"/>
</dbReference>
<dbReference type="FunFam" id="3.40.850.10:FF:000036">
    <property type="entry name" value="Kinesin-like protein"/>
    <property type="match status" value="1"/>
</dbReference>
<dbReference type="Gene3D" id="3.40.850.10">
    <property type="entry name" value="Kinesin motor domain"/>
    <property type="match status" value="1"/>
</dbReference>
<dbReference type="Gene3D" id="1.25.10.10">
    <property type="entry name" value="Leucine-rich Repeat Variant"/>
    <property type="match status" value="1"/>
</dbReference>
<dbReference type="InterPro" id="IPR011989">
    <property type="entry name" value="ARM-like"/>
</dbReference>
<dbReference type="InterPro" id="IPR016024">
    <property type="entry name" value="ARM-type_fold"/>
</dbReference>
<dbReference type="InterPro" id="IPR000225">
    <property type="entry name" value="Armadillo"/>
</dbReference>
<dbReference type="InterPro" id="IPR047149">
    <property type="entry name" value="KIF11-like"/>
</dbReference>
<dbReference type="InterPro" id="IPR019821">
    <property type="entry name" value="Kinesin_motor_CS"/>
</dbReference>
<dbReference type="InterPro" id="IPR001752">
    <property type="entry name" value="Kinesin_motor_dom"/>
</dbReference>
<dbReference type="InterPro" id="IPR036961">
    <property type="entry name" value="Kinesin_motor_dom_sf"/>
</dbReference>
<dbReference type="InterPro" id="IPR027417">
    <property type="entry name" value="P-loop_NTPase"/>
</dbReference>
<dbReference type="PANTHER" id="PTHR47970:SF30">
    <property type="entry name" value="KINESIN-LIKE PROTEIN"/>
    <property type="match status" value="1"/>
</dbReference>
<dbReference type="PANTHER" id="PTHR47970">
    <property type="entry name" value="KINESIN-LIKE PROTEIN KIF11"/>
    <property type="match status" value="1"/>
</dbReference>
<dbReference type="Pfam" id="PF00514">
    <property type="entry name" value="Arm"/>
    <property type="match status" value="1"/>
</dbReference>
<dbReference type="Pfam" id="PF00225">
    <property type="entry name" value="Kinesin"/>
    <property type="match status" value="1"/>
</dbReference>
<dbReference type="PRINTS" id="PR00380">
    <property type="entry name" value="KINESINHEAVY"/>
</dbReference>
<dbReference type="SMART" id="SM00185">
    <property type="entry name" value="ARM"/>
    <property type="match status" value="4"/>
</dbReference>
<dbReference type="SMART" id="SM00129">
    <property type="entry name" value="KISc"/>
    <property type="match status" value="1"/>
</dbReference>
<dbReference type="SUPFAM" id="SSF48371">
    <property type="entry name" value="ARM repeat"/>
    <property type="match status" value="1"/>
</dbReference>
<dbReference type="SUPFAM" id="SSF52540">
    <property type="entry name" value="P-loop containing nucleoside triphosphate hydrolases"/>
    <property type="match status" value="1"/>
</dbReference>
<dbReference type="PROSITE" id="PS50176">
    <property type="entry name" value="ARM_REPEAT"/>
    <property type="match status" value="2"/>
</dbReference>
<dbReference type="PROSITE" id="PS00411">
    <property type="entry name" value="KINESIN_MOTOR_1"/>
    <property type="match status" value="1"/>
</dbReference>
<dbReference type="PROSITE" id="PS50067">
    <property type="entry name" value="KINESIN_MOTOR_2"/>
    <property type="match status" value="1"/>
</dbReference>
<feature type="chain" id="PRO_0000342332" description="Kinesin-like protein KIN-UA">
    <location>
        <begin position="1"/>
        <end position="919"/>
    </location>
</feature>
<feature type="domain" description="Kinesin motor" evidence="2">
    <location>
        <begin position="70"/>
        <end position="412"/>
    </location>
</feature>
<feature type="repeat" description="ARM 1">
    <location>
        <begin position="650"/>
        <end position="689"/>
    </location>
</feature>
<feature type="repeat" description="ARM 2">
    <location>
        <begin position="691"/>
        <end position="731"/>
    </location>
</feature>
<feature type="repeat" description="ARM 3">
    <location>
        <begin position="733"/>
        <end position="773"/>
    </location>
</feature>
<feature type="repeat" description="ARM 4">
    <location>
        <begin position="775"/>
        <end position="814"/>
    </location>
</feature>
<feature type="region of interest" description="Disordered" evidence="3">
    <location>
        <begin position="1"/>
        <end position="68"/>
    </location>
</feature>
<feature type="region of interest" description="Disordered" evidence="3">
    <location>
        <begin position="286"/>
        <end position="305"/>
    </location>
</feature>
<feature type="coiled-coil region" evidence="1">
    <location>
        <begin position="428"/>
        <end position="492"/>
    </location>
</feature>
<feature type="coiled-coil region" evidence="1">
    <location>
        <begin position="530"/>
        <end position="621"/>
    </location>
</feature>
<feature type="short sequence motif" description="D-BOX" evidence="7">
    <location>
        <begin position="382"/>
        <end position="390"/>
    </location>
</feature>
<feature type="compositionally biased region" description="Low complexity" evidence="3">
    <location>
        <begin position="15"/>
        <end position="51"/>
    </location>
</feature>
<feature type="compositionally biased region" description="Gly residues" evidence="3">
    <location>
        <begin position="52"/>
        <end position="66"/>
    </location>
</feature>
<feature type="compositionally biased region" description="Polar residues" evidence="3">
    <location>
        <begin position="291"/>
        <end position="301"/>
    </location>
</feature>
<feature type="binding site" evidence="2">
    <location>
        <begin position="155"/>
        <end position="162"/>
    </location>
    <ligand>
        <name>ATP</name>
        <dbReference type="ChEBI" id="CHEBI:30616"/>
    </ligand>
</feature>
<feature type="mutagenesis site" description="No decreased expression after nuclear envelope breakdown." evidence="5">
    <original>RTSL</original>
    <variation>ATSA</variation>
    <location>
        <begin position="382"/>
        <end position="385"/>
    </location>
</feature>
<comment type="subunit">
    <text evidence="4">Interacts (via C-terminus) with NEK5.</text>
</comment>
<comment type="subcellular location">
    <subcellularLocation>
        <location evidence="5">Cytoplasm</location>
        <location evidence="5">Cytoskeleton</location>
    </subcellularLocation>
    <text evidence="5">Colocalizes with microtubules during interphase. Accumulated at the preprophase band in a cell cycle-dependent manner with a high expression during prophase that decreases after nuclear envelope breakdown.</text>
</comment>
<comment type="alternative products">
    <event type="alternative splicing"/>
    <isoform>
        <id>Q9FZ06-1</id>
        <name>1</name>
        <sequence type="displayed"/>
    </isoform>
    <text>A number of isoforms are produced. According to EST sequences.</text>
</comment>
<comment type="tissue specificity">
    <text evidence="4 5">Expressed in leaves, guard cells, trichomes, vascular tissues, stele of the root tip region and columella cells (PubMed:17971038). Highest expression detected in guard cells (PubMed:21387573).</text>
</comment>
<comment type="domain">
    <text evidence="7">D-BOX motif functions as a recognition motif for the ubiquitination machinery.</text>
</comment>
<comment type="disruption phenotype">
    <text evidence="5">No visible phenotype.</text>
</comment>
<comment type="similarity">
    <text evidence="6">Belongs to the TRAFAC class myosin-kinesin ATPase superfamily. Kinesin family. Ungrouped subfamily.</text>
</comment>
<comment type="sequence caution" evidence="9">
    <conflict type="erroneous gene model prediction">
        <sequence resource="EMBL-CDS" id="AAF79654"/>
    </conflict>
</comment>
<gene>
    <name evidence="7" type="primary">KINUA</name>
    <name evidence="13" type="synonym">ARK3</name>
    <name evidence="12" type="synonym">PAK</name>
    <name evidence="10" type="ordered locus">At1g12430</name>
    <name evidence="11" type="ORF">F5O11.15</name>
</gene>
<sequence length="919" mass="100887">MSTTSGTGGVSYRNGTQRSSLRTQSSASTSSGGQKASVKSKSVLRKSSPAALGGGSSKSGGGGDAGVPGRVRVAVRLRPRNGEELIADADFADCVELQPELKRLKLRKNNWDTDTFEFDEVLTEYASQKRVYEVVAKPVVEGVLDGYNGTIMAYGQTGTGKTYTLGQLGEEDVADRGIMVRAMEDILAEVSLETDSISVSYLQLYMETVQDLLDPSNDNIAIVEDPKNGDVSLPGATLVEIRDQQSFLELLQLGEAHRFAANTKLNTESSRSHAILMVNVRRSMKTRDGLSSESNGNSHMTKSLKPPVVRKGKLVVVDLAGSERINKSGSEGHTLEEAKSINLSLSALGKCINALAENSSHVPFRDSKLTRLLRDSFGGTARTSLVITIGPSPRHRGETTSTIMFGQRAMKVENMVKIKEEFDYKSLSRRLEVQLDNLIEENERQQKAFVDEIERITVEAHNQISEAEKRYANALEDEKLRYQNDYMESIKKLEENWSKNQKKLAAERLALGEKNGLDITSNGNRSIAPALEEVSELKKLLQKEAQSKMAAEEEVNRLKHQLNEFKKVEASGNSEIMRLHKMLENETQQKEKLEGEIATLHSQLLQLSLTADETRRNLEQHGSEKTSGARDSLMSQLRLPQIQDPGNAEKPPVARLFEQVGLQKILSLLEAEDADVRIHAVKVVANLAAEEANQQQIVEAGGLTSLLMLLKNTEDETIHRVAAGAIANLAMNETNQELIMDQGGIGLLSSTAANAEDPQTLRMVAGAIANLCGNDKLQTKLRSEGGIAALLGMVRCGHPDVLAQVARGIANFAKCESRASTQGTKRGKSLLIEDGALSWIVQNAKTETAAIRRHIELALCHLAQHEGNAKEMVKEGAMWELVRISRDCSREDIRSLAHRTLTSSPTFLTELRRLRVDIR</sequence>
<keyword id="KW-0025">Alternative splicing</keyword>
<keyword id="KW-0067">ATP-binding</keyword>
<keyword id="KW-0175">Coiled coil</keyword>
<keyword id="KW-0963">Cytoplasm</keyword>
<keyword id="KW-0206">Cytoskeleton</keyword>
<keyword id="KW-0493">Microtubule</keyword>
<keyword id="KW-0505">Motor protein</keyword>
<keyword id="KW-0547">Nucleotide-binding</keyword>
<keyword id="KW-1185">Reference proteome</keyword>
<keyword id="KW-0677">Repeat</keyword>
<organism>
    <name type="scientific">Arabidopsis thaliana</name>
    <name type="common">Mouse-ear cress</name>
    <dbReference type="NCBI Taxonomy" id="3702"/>
    <lineage>
        <taxon>Eukaryota</taxon>
        <taxon>Viridiplantae</taxon>
        <taxon>Streptophyta</taxon>
        <taxon>Embryophyta</taxon>
        <taxon>Tracheophyta</taxon>
        <taxon>Spermatophyta</taxon>
        <taxon>Magnoliopsida</taxon>
        <taxon>eudicotyledons</taxon>
        <taxon>Gunneridae</taxon>
        <taxon>Pentapetalae</taxon>
        <taxon>rosids</taxon>
        <taxon>malvids</taxon>
        <taxon>Brassicales</taxon>
        <taxon>Brassicaceae</taxon>
        <taxon>Camelineae</taxon>
        <taxon>Arabidopsis</taxon>
    </lineage>
</organism>
<name>KINUA_ARATH</name>
<reference key="1">
    <citation type="journal article" date="2008" name="Plant J.">
        <title>Armadillo repeat-containing kinesins and a NIMA-related kinase are required for epidermal-cell morphogenesis in Arabidopsis.</title>
        <authorList>
            <person name="Sakai T."/>
            <person name="van der Honing H."/>
            <person name="Nishioka M."/>
            <person name="Uehara Y."/>
            <person name="Takahashi M."/>
            <person name="Fujisawa N."/>
            <person name="Saji K."/>
            <person name="Seki M."/>
            <person name="Shinozaki K."/>
            <person name="Jones M.A."/>
            <person name="Smirnoff N."/>
            <person name="Okada K."/>
            <person name="Wasteneys G.O."/>
        </authorList>
    </citation>
    <scope>NUCLEOTIDE SEQUENCE [MRNA]</scope>
    <scope>TISSUE SPECIFICITY</scope>
    <scope>INTERACTION WITH NEK5</scope>
    <source>
        <strain>cv. Landsberg erecta</strain>
    </source>
</reference>
<reference key="2">
    <citation type="submission" date="1999-06" db="EMBL/GenBank/DDBJ databases">
        <title>The kinesin-like protein PAK has an Armadillo motif tail and is involved in guard cell development in Arabidopsis.</title>
        <authorList>
            <person name="Lai L.P."/>
            <person name="Cyr R.J."/>
            <person name="Doyle J.J."/>
            <person name="Nasrallah J.B."/>
        </authorList>
    </citation>
    <scope>NUCLEOTIDE SEQUENCE [MRNA]</scope>
    <source>
        <strain>cv. Columbia</strain>
    </source>
</reference>
<reference key="3">
    <citation type="journal article" date="2000" name="Nature">
        <title>Sequence and analysis of chromosome 1 of the plant Arabidopsis thaliana.</title>
        <authorList>
            <person name="Theologis A."/>
            <person name="Ecker J.R."/>
            <person name="Palm C.J."/>
            <person name="Federspiel N.A."/>
            <person name="Kaul S."/>
            <person name="White O."/>
            <person name="Alonso J."/>
            <person name="Altafi H."/>
            <person name="Araujo R."/>
            <person name="Bowman C.L."/>
            <person name="Brooks S.Y."/>
            <person name="Buehler E."/>
            <person name="Chan A."/>
            <person name="Chao Q."/>
            <person name="Chen H."/>
            <person name="Cheuk R.F."/>
            <person name="Chin C.W."/>
            <person name="Chung M.K."/>
            <person name="Conn L."/>
            <person name="Conway A.B."/>
            <person name="Conway A.R."/>
            <person name="Creasy T.H."/>
            <person name="Dewar K."/>
            <person name="Dunn P."/>
            <person name="Etgu P."/>
            <person name="Feldblyum T.V."/>
            <person name="Feng J.-D."/>
            <person name="Fong B."/>
            <person name="Fujii C.Y."/>
            <person name="Gill J.E."/>
            <person name="Goldsmith A.D."/>
            <person name="Haas B."/>
            <person name="Hansen N.F."/>
            <person name="Hughes B."/>
            <person name="Huizar L."/>
            <person name="Hunter J.L."/>
            <person name="Jenkins J."/>
            <person name="Johnson-Hopson C."/>
            <person name="Khan S."/>
            <person name="Khaykin E."/>
            <person name="Kim C.J."/>
            <person name="Koo H.L."/>
            <person name="Kremenetskaia I."/>
            <person name="Kurtz D.B."/>
            <person name="Kwan A."/>
            <person name="Lam B."/>
            <person name="Langin-Hooper S."/>
            <person name="Lee A."/>
            <person name="Lee J.M."/>
            <person name="Lenz C.A."/>
            <person name="Li J.H."/>
            <person name="Li Y.-P."/>
            <person name="Lin X."/>
            <person name="Liu S.X."/>
            <person name="Liu Z.A."/>
            <person name="Luros J.S."/>
            <person name="Maiti R."/>
            <person name="Marziali A."/>
            <person name="Militscher J."/>
            <person name="Miranda M."/>
            <person name="Nguyen M."/>
            <person name="Nierman W.C."/>
            <person name="Osborne B.I."/>
            <person name="Pai G."/>
            <person name="Peterson J."/>
            <person name="Pham P.K."/>
            <person name="Rizzo M."/>
            <person name="Rooney T."/>
            <person name="Rowley D."/>
            <person name="Sakano H."/>
            <person name="Salzberg S.L."/>
            <person name="Schwartz J.R."/>
            <person name="Shinn P."/>
            <person name="Southwick A.M."/>
            <person name="Sun H."/>
            <person name="Tallon L.J."/>
            <person name="Tambunga G."/>
            <person name="Toriumi M.J."/>
            <person name="Town C.D."/>
            <person name="Utterback T."/>
            <person name="Van Aken S."/>
            <person name="Vaysberg M."/>
            <person name="Vysotskaia V.S."/>
            <person name="Walker M."/>
            <person name="Wu D."/>
            <person name="Yu G."/>
            <person name="Fraser C.M."/>
            <person name="Venter J.C."/>
            <person name="Davis R.W."/>
        </authorList>
    </citation>
    <scope>NUCLEOTIDE SEQUENCE [LARGE SCALE GENOMIC DNA]</scope>
    <source>
        <strain>cv. Columbia</strain>
    </source>
</reference>
<reference key="4">
    <citation type="journal article" date="2017" name="Plant J.">
        <title>Araport11: a complete reannotation of the Arabidopsis thaliana reference genome.</title>
        <authorList>
            <person name="Cheng C.Y."/>
            <person name="Krishnakumar V."/>
            <person name="Chan A.P."/>
            <person name="Thibaud-Nissen F."/>
            <person name="Schobel S."/>
            <person name="Town C.D."/>
        </authorList>
    </citation>
    <scope>GENOME REANNOTATION</scope>
    <source>
        <strain>cv. Columbia</strain>
    </source>
</reference>
<reference key="5">
    <citation type="journal article" date="2001" name="BMC Genomics">
        <title>Kinesins in the Arabidopsis genome: a comparative analysis among eukaryotes.</title>
        <authorList>
            <person name="Reddy A.S."/>
            <person name="Day I.S."/>
        </authorList>
    </citation>
    <scope>GENE FAMILY</scope>
</reference>
<reference key="6">
    <citation type="journal article" date="2006" name="BMC Genomics">
        <title>Comprehensive comparative analysis of kinesins in photosynthetic eukaryotes.</title>
        <authorList>
            <person name="Richardson D.N."/>
            <person name="Simmons M.P."/>
            <person name="Reddy A.S."/>
        </authorList>
    </citation>
    <scope>GENE FAMILY</scope>
    <scope>NOMENCLATURE</scope>
</reference>
<reference key="7">
    <citation type="journal article" date="2011" name="Cytoskeleton">
        <title>An ungrouped plant kinesin accumulates at the preprophase band in a cell cycle-dependent manner.</title>
        <authorList>
            <person name="Malcos J.L."/>
            <person name="Cyr R.J."/>
        </authorList>
    </citation>
    <scope>IDENTIFICATION</scope>
    <scope>SUBCELLULAR LOCATION</scope>
    <scope>TISSUE SPECIFICITY</scope>
    <scope>MUTAGENESIS OF 382-ARG--LEU-385</scope>
    <scope>DISRUPTION PHENOTYPE</scope>
</reference>
<reference key="8">
    <citation type="journal article" date="2012" name="Protoplasma">
        <title>Functions of the Arabidopsis kinesin superfamily of microtubule-based motor proteins.</title>
        <authorList>
            <person name="Zhu C."/>
            <person name="Dixit R."/>
        </authorList>
    </citation>
    <scope>REVIEW</scope>
</reference>
<evidence type="ECO:0000255" key="1"/>
<evidence type="ECO:0000255" key="2">
    <source>
        <dbReference type="PROSITE-ProRule" id="PRU00283"/>
    </source>
</evidence>
<evidence type="ECO:0000256" key="3">
    <source>
        <dbReference type="SAM" id="MobiDB-lite"/>
    </source>
</evidence>
<evidence type="ECO:0000269" key="4">
    <source>
    </source>
</evidence>
<evidence type="ECO:0000269" key="5">
    <source>
    </source>
</evidence>
<evidence type="ECO:0000303" key="6">
    <source>
    </source>
</evidence>
<evidence type="ECO:0000303" key="7">
    <source>
    </source>
</evidence>
<evidence type="ECO:0000303" key="8">
    <source ref="2"/>
</evidence>
<evidence type="ECO:0000305" key="9"/>
<evidence type="ECO:0000312" key="10">
    <source>
        <dbReference type="Araport" id="AT1G12430"/>
    </source>
</evidence>
<evidence type="ECO:0000312" key="11">
    <source>
        <dbReference type="EMBL" id="AAF79654.1"/>
    </source>
</evidence>
<evidence type="ECO:0000312" key="12">
    <source>
        <dbReference type="EMBL" id="AAG08965.1"/>
    </source>
</evidence>
<evidence type="ECO:0000312" key="13">
    <source>
        <dbReference type="EMBL" id="BAF95587.1"/>
    </source>
</evidence>